<gene>
    <name type="primary">Itga11</name>
</gene>
<sequence length="1188" mass="133012">MDFPRGLLVAWTLSLWPGFTDTFNMDTRNPRVIAGPSAAFFGYTVQQHDISGKKWLVVGAPMETNGHQKTGDVYKCPVTQGNCTKLNLGRVTLSNVSERKDNMRLGLSLATNPKDNSFLACSPLWSHECGSSYYTTGMCSRANSNFRFSKTVAPALQRCQTYMDIVIVLDGSNSIYPWVEVQHFLINILKKFYIGPGQIQVGIVQYGEDAVHEFHLNDYRSVKDVVEAASHIEQRGGTETRTAFGIEFARSEAFQKGGRKGAKKVMIVITDGESHDSPDLEKVIRQSEKDNVTRYAVAVLGYYNRRGINPETFLNEIKYIASDPDDKHFFNVTDEAALKDIVDALGDRIFSLEGTNKNETSFGLEMSQTGFSSHVVEDGILLGAVGAYDWNGAVLKETSAGKVIPHRESYLKEFPEELKNHAAYLGYTVTSVVSSRQGRVYVAGAPRFNHTGKVILFSMHNNRSLTIHQALRGEQIGSYFGSEITSVDVNDDRVTDVLLVGAPMYFSEGRERGKVYVYNLRQNRFVYNGTLKDSHSYQNARFGSCIASVQDLNQDSYNDVVVGAPLEDSHRGAIYIFHGFQTNILKKPMQRITASELAPGLQHFGCSIHGQLDLNEDGLVDLAVGALGNAVVLWARPVVQINASLHFEPSKINIFHKDCKRNGRDATCLAAFLCFIPIFLAPHFQTATVGIRYNATMDERRYMPRAHLDEGGDQFTNRAVLLSSGQEHCQRINFHVLDTADYVKPVAFSVEYSLEDPDNGPMLDNGWPTTLRVSVPFWNGCNEDEHCVPDLVLDARSDLPTAMEYCQRVLGRPAQDCSSYTLSFDTTVFIIESTRRRVAVEATLENRGENAYSAVLNISQSENLQFASLIQKDDSDNSIECVNEERRLHKKVCNVSYPFFRAKAKVAFRLDFEFSKSVFLHHLQIHLGAGSDSHEQDSTADDNTALLRFHLKYEADVLFTRSSSLSHFEVKANSSLESYDGIGPPFNCVFKVQNLGFFPIHGVMMKITVPIATRGGNRLLMLRDFFTDQGNTSCNIWGNSTEYRSTPTEEDLSHAPQRNHSNSDVVSIICNLRLAPSQETSFYLVGNLWLTSLKALKYRSLKITVNAALQRQFHSPFIFREEDPSRQVTFEISKQEDWQVPIWIIVGSTLGGLLLLALLVLALWKLGFFKSAKRKREPGLGPIPKELK</sequence>
<proteinExistence type="evidence at protein level"/>
<feature type="signal peptide" evidence="3">
    <location>
        <begin position="1"/>
        <end position="22"/>
    </location>
</feature>
<feature type="chain" id="PRO_0000016319" description="Integrin alpha-11">
    <location>
        <begin position="23"/>
        <end position="1188"/>
    </location>
</feature>
<feature type="topological domain" description="Extracellular" evidence="3">
    <location>
        <begin position="23"/>
        <end position="1141"/>
    </location>
</feature>
<feature type="transmembrane region" description="Helical" evidence="3">
    <location>
        <begin position="1142"/>
        <end position="1164"/>
    </location>
</feature>
<feature type="topological domain" description="Cytoplasmic" evidence="3">
    <location>
        <begin position="1165"/>
        <end position="1188"/>
    </location>
</feature>
<feature type="repeat" description="FG-GAP 1" evidence="5">
    <location>
        <begin position="24"/>
        <end position="85"/>
    </location>
</feature>
<feature type="repeat" description="FG-GAP 2" evidence="5">
    <location>
        <begin position="91"/>
        <end position="151"/>
    </location>
</feature>
<feature type="domain" description="VWFA" evidence="4">
    <location>
        <begin position="164"/>
        <end position="345"/>
    </location>
</feature>
<feature type="repeat" description="FG-GAP 3" evidence="5">
    <location>
        <begin position="355"/>
        <end position="406"/>
    </location>
</feature>
<feature type="repeat" description="FG-GAP 4" evidence="5">
    <location>
        <begin position="411"/>
        <end position="461"/>
    </location>
</feature>
<feature type="repeat" description="FG-GAP 5" evidence="5">
    <location>
        <begin position="462"/>
        <end position="527"/>
    </location>
</feature>
<feature type="repeat" description="FG-GAP 6" evidence="5">
    <location>
        <begin position="528"/>
        <end position="586"/>
    </location>
</feature>
<feature type="repeat" description="FG-GAP 7" evidence="5">
    <location>
        <begin position="590"/>
        <end position="650"/>
    </location>
</feature>
<feature type="binding site" evidence="2">
    <location>
        <position position="488"/>
    </location>
    <ligand>
        <name>Ca(2+)</name>
        <dbReference type="ChEBI" id="CHEBI:29108"/>
        <label>1</label>
    </ligand>
</feature>
<feature type="binding site" evidence="2">
    <location>
        <position position="490"/>
    </location>
    <ligand>
        <name>Ca(2+)</name>
        <dbReference type="ChEBI" id="CHEBI:29108"/>
        <label>1</label>
    </ligand>
</feature>
<feature type="binding site" evidence="2">
    <location>
        <position position="492"/>
    </location>
    <ligand>
        <name>Ca(2+)</name>
        <dbReference type="ChEBI" id="CHEBI:29108"/>
        <label>1</label>
    </ligand>
</feature>
<feature type="binding site" evidence="2">
    <location>
        <position position="496"/>
    </location>
    <ligand>
        <name>Ca(2+)</name>
        <dbReference type="ChEBI" id="CHEBI:29108"/>
        <label>1</label>
    </ligand>
</feature>
<feature type="binding site" evidence="2">
    <location>
        <position position="551"/>
    </location>
    <ligand>
        <name>Ca(2+)</name>
        <dbReference type="ChEBI" id="CHEBI:29108"/>
        <label>2</label>
    </ligand>
</feature>
<feature type="binding site" evidence="2">
    <location>
        <position position="553"/>
    </location>
    <ligand>
        <name>Ca(2+)</name>
        <dbReference type="ChEBI" id="CHEBI:29108"/>
        <label>2</label>
    </ligand>
</feature>
<feature type="binding site" evidence="2">
    <location>
        <position position="555"/>
    </location>
    <ligand>
        <name>Ca(2+)</name>
        <dbReference type="ChEBI" id="CHEBI:29108"/>
        <label>2</label>
    </ligand>
</feature>
<feature type="binding site" evidence="2">
    <location>
        <position position="559"/>
    </location>
    <ligand>
        <name>Ca(2+)</name>
        <dbReference type="ChEBI" id="CHEBI:29108"/>
        <label>2</label>
    </ligand>
</feature>
<feature type="binding site" evidence="2">
    <location>
        <position position="613"/>
    </location>
    <ligand>
        <name>Ca(2+)</name>
        <dbReference type="ChEBI" id="CHEBI:29108"/>
        <label>3</label>
    </ligand>
</feature>
<feature type="binding site" evidence="2">
    <location>
        <position position="615"/>
    </location>
    <ligand>
        <name>Ca(2+)</name>
        <dbReference type="ChEBI" id="CHEBI:29108"/>
        <label>3</label>
    </ligand>
</feature>
<feature type="binding site" evidence="2">
    <location>
        <position position="617"/>
    </location>
    <ligand>
        <name>Ca(2+)</name>
        <dbReference type="ChEBI" id="CHEBI:29108"/>
        <label>3</label>
    </ligand>
</feature>
<feature type="binding site" evidence="2">
    <location>
        <position position="621"/>
    </location>
    <ligand>
        <name>Ca(2+)</name>
        <dbReference type="ChEBI" id="CHEBI:29108"/>
        <label>3</label>
    </ligand>
</feature>
<feature type="glycosylation site" description="N-linked (GlcNAc...) asparagine" evidence="3">
    <location>
        <position position="82"/>
    </location>
</feature>
<feature type="glycosylation site" description="N-linked (GlcNAc...) asparagine" evidence="3">
    <location>
        <position position="95"/>
    </location>
</feature>
<feature type="glycosylation site" description="N-linked (GlcNAc...) asparagine" evidence="3">
    <location>
        <position position="291"/>
    </location>
</feature>
<feature type="glycosylation site" description="N-linked (GlcNAc...) asparagine" evidence="6">
    <location>
        <position position="331"/>
    </location>
</feature>
<feature type="glycosylation site" description="N-linked (GlcNAc...) asparagine" evidence="3">
    <location>
        <position position="358"/>
    </location>
</feature>
<feature type="glycosylation site" description="N-linked (GlcNAc...) asparagine" evidence="3">
    <location>
        <position position="449"/>
    </location>
</feature>
<feature type="glycosylation site" description="N-linked (GlcNAc...) asparagine" evidence="3">
    <location>
        <position position="462"/>
    </location>
</feature>
<feature type="glycosylation site" description="N-linked (GlcNAc...) asparagine" evidence="3">
    <location>
        <position position="528"/>
    </location>
</feature>
<feature type="glycosylation site" description="N-linked (GlcNAc...) asparagine" evidence="3">
    <location>
        <position position="642"/>
    </location>
</feature>
<feature type="glycosylation site" description="N-linked (GlcNAc...) asparagine" evidence="3">
    <location>
        <position position="694"/>
    </location>
</feature>
<feature type="glycosylation site" description="N-linked (GlcNAc...) asparagine" evidence="3">
    <location>
        <position position="857"/>
    </location>
</feature>
<feature type="glycosylation site" description="N-linked (GlcNAc...) asparagine" evidence="3">
    <location>
        <position position="894"/>
    </location>
</feature>
<feature type="glycosylation site" description="N-linked (GlcNAc...) asparagine" evidence="3">
    <location>
        <position position="973"/>
    </location>
</feature>
<feature type="glycosylation site" description="N-linked (GlcNAc...) asparagine" evidence="3">
    <location>
        <position position="1031"/>
    </location>
</feature>
<feature type="glycosylation site" description="N-linked (GlcNAc...) asparagine" evidence="3">
    <location>
        <position position="1039"/>
    </location>
</feature>
<feature type="glycosylation site" description="N-linked (GlcNAc...) asparagine" evidence="3">
    <location>
        <position position="1059"/>
    </location>
</feature>
<feature type="disulfide bond" evidence="1">
    <location>
        <begin position="76"/>
        <end position="83"/>
    </location>
</feature>
<feature type="disulfide bond" evidence="3">
    <location>
        <begin position="121"/>
        <end position="139"/>
    </location>
</feature>
<feature type="disulfide bond" evidence="3">
    <location>
        <begin position="129"/>
        <end position="159"/>
    </location>
</feature>
<feature type="disulfide bond" evidence="1">
    <location>
        <begin position="659"/>
        <end position="668"/>
    </location>
</feature>
<feature type="disulfide bond" evidence="1">
    <location>
        <begin position="674"/>
        <end position="729"/>
    </location>
</feature>
<feature type="disulfide bond" evidence="1">
    <location>
        <begin position="781"/>
        <end position="787"/>
    </location>
</feature>
<feature type="disulfide bond" evidence="1">
    <location>
        <begin position="881"/>
        <end position="893"/>
    </location>
</feature>
<organism>
    <name type="scientific">Mus musculus</name>
    <name type="common">Mouse</name>
    <dbReference type="NCBI Taxonomy" id="10090"/>
    <lineage>
        <taxon>Eukaryota</taxon>
        <taxon>Metazoa</taxon>
        <taxon>Chordata</taxon>
        <taxon>Craniata</taxon>
        <taxon>Vertebrata</taxon>
        <taxon>Euteleostomi</taxon>
        <taxon>Mammalia</taxon>
        <taxon>Eutheria</taxon>
        <taxon>Euarchontoglires</taxon>
        <taxon>Glires</taxon>
        <taxon>Rodentia</taxon>
        <taxon>Myomorpha</taxon>
        <taxon>Muroidea</taxon>
        <taxon>Muridae</taxon>
        <taxon>Murinae</taxon>
        <taxon>Mus</taxon>
        <taxon>Mus</taxon>
    </lineage>
</organism>
<keyword id="KW-0106">Calcium</keyword>
<keyword id="KW-0130">Cell adhesion</keyword>
<keyword id="KW-1015">Disulfide bond</keyword>
<keyword id="KW-0325">Glycoprotein</keyword>
<keyword id="KW-0401">Integrin</keyword>
<keyword id="KW-0460">Magnesium</keyword>
<keyword id="KW-0472">Membrane</keyword>
<keyword id="KW-0479">Metal-binding</keyword>
<keyword id="KW-0675">Receptor</keyword>
<keyword id="KW-1185">Reference proteome</keyword>
<keyword id="KW-0677">Repeat</keyword>
<keyword id="KW-0732">Signal</keyword>
<keyword id="KW-0812">Transmembrane</keyword>
<keyword id="KW-1133">Transmembrane helix</keyword>
<dbReference type="EMBL" id="BC058716">
    <property type="protein sequence ID" value="AAH58716.1"/>
    <property type="molecule type" value="mRNA"/>
</dbReference>
<dbReference type="CCDS" id="CCDS23265.1"/>
<dbReference type="SMR" id="P61622"/>
<dbReference type="ComplexPortal" id="CPX-3125">
    <property type="entry name" value="Integrin alpha11-beta1 complex"/>
</dbReference>
<dbReference type="FunCoup" id="P61622">
    <property type="interactions" value="40"/>
</dbReference>
<dbReference type="STRING" id="10090.ENSMUSP00000034774"/>
<dbReference type="GlyCosmos" id="P61622">
    <property type="glycosylation" value="16 sites, No reported glycans"/>
</dbReference>
<dbReference type="GlyGen" id="P61622">
    <property type="glycosylation" value="16 sites, 5 N-linked glycans (10 sites)"/>
</dbReference>
<dbReference type="iPTMnet" id="P61622"/>
<dbReference type="PhosphoSitePlus" id="P61622"/>
<dbReference type="PaxDb" id="10090-ENSMUSP00000034774"/>
<dbReference type="PeptideAtlas" id="P61622"/>
<dbReference type="ProteomicsDB" id="301681"/>
<dbReference type="Pumba" id="P61622"/>
<dbReference type="UCSC" id="uc009qal.2">
    <property type="organism name" value="mouse"/>
</dbReference>
<dbReference type="AGR" id="MGI:2442114"/>
<dbReference type="MGI" id="MGI:2442114">
    <property type="gene designation" value="Itga11"/>
</dbReference>
<dbReference type="eggNOG" id="KOG3637">
    <property type="taxonomic scope" value="Eukaryota"/>
</dbReference>
<dbReference type="InParanoid" id="P61622"/>
<dbReference type="PhylomeDB" id="P61622"/>
<dbReference type="Reactome" id="R-MMU-216083">
    <property type="pathway name" value="Integrin cell surface interactions"/>
</dbReference>
<dbReference type="ChiTaRS" id="Itga11">
    <property type="organism name" value="mouse"/>
</dbReference>
<dbReference type="PRO" id="PR:P61622"/>
<dbReference type="Proteomes" id="UP000000589">
    <property type="component" value="Unplaced"/>
</dbReference>
<dbReference type="RNAct" id="P61622">
    <property type="molecule type" value="protein"/>
</dbReference>
<dbReference type="GO" id="GO:0008305">
    <property type="term" value="C:integrin complex"/>
    <property type="evidence" value="ECO:0007669"/>
    <property type="project" value="InterPro"/>
</dbReference>
<dbReference type="GO" id="GO:0046872">
    <property type="term" value="F:metal ion binding"/>
    <property type="evidence" value="ECO:0007669"/>
    <property type="project" value="UniProtKB-KW"/>
</dbReference>
<dbReference type="GO" id="GO:0007155">
    <property type="term" value="P:cell adhesion"/>
    <property type="evidence" value="ECO:0007669"/>
    <property type="project" value="UniProtKB-KW"/>
</dbReference>
<dbReference type="GO" id="GO:0010761">
    <property type="term" value="P:fibroblast migration"/>
    <property type="evidence" value="ECO:0000315"/>
    <property type="project" value="MGI"/>
</dbReference>
<dbReference type="GO" id="GO:0007229">
    <property type="term" value="P:integrin-mediated signaling pathway"/>
    <property type="evidence" value="ECO:0007669"/>
    <property type="project" value="UniProtKB-KW"/>
</dbReference>
<dbReference type="GO" id="GO:0006929">
    <property type="term" value="P:substrate-dependent cell migration"/>
    <property type="evidence" value="ECO:0000315"/>
    <property type="project" value="MGI"/>
</dbReference>
<dbReference type="CDD" id="cd01469">
    <property type="entry name" value="vWA_integrins_alpha_subunit"/>
    <property type="match status" value="1"/>
</dbReference>
<dbReference type="FunFam" id="2.130.10.130:FF:000001">
    <property type="entry name" value="Integrin subunit alpha 10"/>
    <property type="match status" value="1"/>
</dbReference>
<dbReference type="FunFam" id="2.130.10.130:FF:000004">
    <property type="entry name" value="Integrin subunit alpha 10"/>
    <property type="match status" value="1"/>
</dbReference>
<dbReference type="FunFam" id="2.60.40.1460:FF:000006">
    <property type="entry name" value="Integrin subunit alpha 11"/>
    <property type="match status" value="1"/>
</dbReference>
<dbReference type="FunFam" id="1.20.5.930:FF:000005">
    <property type="entry name" value="Integrin, alpha 10"/>
    <property type="match status" value="1"/>
</dbReference>
<dbReference type="FunFam" id="3.40.50.410:FF:000012">
    <property type="entry name" value="Integrin, alpha 10"/>
    <property type="match status" value="1"/>
</dbReference>
<dbReference type="Gene3D" id="1.20.5.930">
    <property type="entry name" value="Bicelle-embedded integrin alpha(iib) transmembrane segment"/>
    <property type="match status" value="1"/>
</dbReference>
<dbReference type="Gene3D" id="2.130.10.130">
    <property type="entry name" value="Integrin alpha, N-terminal"/>
    <property type="match status" value="2"/>
</dbReference>
<dbReference type="Gene3D" id="2.60.40.1460">
    <property type="entry name" value="Integrin domains. Chain A, domain 2"/>
    <property type="match status" value="1"/>
</dbReference>
<dbReference type="Gene3D" id="2.60.40.1510">
    <property type="entry name" value="ntegrin, alpha v. Chain A, domain 3"/>
    <property type="match status" value="1"/>
</dbReference>
<dbReference type="Gene3D" id="2.60.40.1530">
    <property type="entry name" value="ntegrin, alpha v. Chain A, domain 4"/>
    <property type="match status" value="1"/>
</dbReference>
<dbReference type="Gene3D" id="3.40.50.410">
    <property type="entry name" value="von Willebrand factor, type A domain"/>
    <property type="match status" value="1"/>
</dbReference>
<dbReference type="InterPro" id="IPR013517">
    <property type="entry name" value="FG-GAP"/>
</dbReference>
<dbReference type="InterPro" id="IPR013519">
    <property type="entry name" value="Int_alpha_beta-p"/>
</dbReference>
<dbReference type="InterPro" id="IPR000413">
    <property type="entry name" value="Integrin_alpha"/>
</dbReference>
<dbReference type="InterPro" id="IPR013649">
    <property type="entry name" value="Integrin_alpha_Ig-like_1"/>
</dbReference>
<dbReference type="InterPro" id="IPR048285">
    <property type="entry name" value="Integrin_alpha_Ig-like_2"/>
</dbReference>
<dbReference type="InterPro" id="IPR028994">
    <property type="entry name" value="Integrin_alpha_N"/>
</dbReference>
<dbReference type="InterPro" id="IPR032695">
    <property type="entry name" value="Integrin_dom_sf"/>
</dbReference>
<dbReference type="InterPro" id="IPR002035">
    <property type="entry name" value="VWF_A"/>
</dbReference>
<dbReference type="InterPro" id="IPR036465">
    <property type="entry name" value="vWFA_dom_sf"/>
</dbReference>
<dbReference type="PANTHER" id="PTHR23220">
    <property type="entry name" value="INTEGRIN ALPHA"/>
    <property type="match status" value="1"/>
</dbReference>
<dbReference type="PANTHER" id="PTHR23220:SF21">
    <property type="entry name" value="INTEGRIN ALPHA-11"/>
    <property type="match status" value="1"/>
</dbReference>
<dbReference type="Pfam" id="PF01839">
    <property type="entry name" value="FG-GAP"/>
    <property type="match status" value="2"/>
</dbReference>
<dbReference type="Pfam" id="PF08441">
    <property type="entry name" value="Integrin_A_Ig_1"/>
    <property type="match status" value="1"/>
</dbReference>
<dbReference type="Pfam" id="PF20805">
    <property type="entry name" value="Integrin_A_Ig_2"/>
    <property type="match status" value="1"/>
</dbReference>
<dbReference type="Pfam" id="PF00092">
    <property type="entry name" value="VWA"/>
    <property type="match status" value="1"/>
</dbReference>
<dbReference type="PRINTS" id="PR01185">
    <property type="entry name" value="INTEGRINA"/>
</dbReference>
<dbReference type="PRINTS" id="PR00453">
    <property type="entry name" value="VWFADOMAIN"/>
</dbReference>
<dbReference type="SMART" id="SM00191">
    <property type="entry name" value="Int_alpha"/>
    <property type="match status" value="5"/>
</dbReference>
<dbReference type="SMART" id="SM00327">
    <property type="entry name" value="VWA"/>
    <property type="match status" value="1"/>
</dbReference>
<dbReference type="SUPFAM" id="SSF69318">
    <property type="entry name" value="Integrin alpha N-terminal domain"/>
    <property type="match status" value="1"/>
</dbReference>
<dbReference type="SUPFAM" id="SSF69179">
    <property type="entry name" value="Integrin domains"/>
    <property type="match status" value="3"/>
</dbReference>
<dbReference type="SUPFAM" id="SSF53300">
    <property type="entry name" value="vWA-like"/>
    <property type="match status" value="1"/>
</dbReference>
<dbReference type="PROSITE" id="PS51470">
    <property type="entry name" value="FG_GAP"/>
    <property type="match status" value="7"/>
</dbReference>
<dbReference type="PROSITE" id="PS50234">
    <property type="entry name" value="VWFA"/>
    <property type="match status" value="1"/>
</dbReference>
<accession>P61622</accession>
<reference key="1">
    <citation type="journal article" date="2004" name="Genome Res.">
        <title>The status, quality, and expansion of the NIH full-length cDNA project: the Mammalian Gene Collection (MGC).</title>
        <authorList>
            <consortium name="The MGC Project Team"/>
        </authorList>
    </citation>
    <scope>NUCLEOTIDE SEQUENCE [LARGE SCALE MRNA]</scope>
    <source>
        <strain>C57BL/6J</strain>
        <tissue>Brain</tissue>
    </source>
</reference>
<reference key="2">
    <citation type="journal article" date="2009" name="Mol. Cell. Proteomics">
        <title>The mouse C2C12 myoblast cell surface N-linked glycoproteome: identification, glycosite occupancy, and membrane orientation.</title>
        <authorList>
            <person name="Gundry R.L."/>
            <person name="Raginski K."/>
            <person name="Tarasova Y."/>
            <person name="Tchernyshyov I."/>
            <person name="Bausch-Fluck D."/>
            <person name="Elliott S.T."/>
            <person name="Boheler K.R."/>
            <person name="Van Eyk J.E."/>
            <person name="Wollscheid B."/>
        </authorList>
    </citation>
    <scope>GLYCOSYLATION [LARGE SCALE ANALYSIS] AT ASN-331</scope>
    <source>
        <tissue>Myoblast</tissue>
    </source>
</reference>
<evidence type="ECO:0000250" key="1"/>
<evidence type="ECO:0000250" key="2">
    <source>
        <dbReference type="UniProtKB" id="P08648"/>
    </source>
</evidence>
<evidence type="ECO:0000255" key="3"/>
<evidence type="ECO:0000255" key="4">
    <source>
        <dbReference type="PROSITE-ProRule" id="PRU00219"/>
    </source>
</evidence>
<evidence type="ECO:0000255" key="5">
    <source>
        <dbReference type="PROSITE-ProRule" id="PRU00803"/>
    </source>
</evidence>
<evidence type="ECO:0000269" key="6">
    <source>
    </source>
</evidence>
<evidence type="ECO:0000305" key="7"/>
<comment type="function">
    <text evidence="1">Integrin alpha-11/beta-1 is a receptor for collagen.</text>
</comment>
<comment type="subunit">
    <text evidence="1">Heterodimer of an alpha and a beta subunit. Alpha-11 associates with beta-1 (By similarity). Interacts with RAB21 (By similarity).</text>
</comment>
<comment type="subcellular location">
    <subcellularLocation>
        <location evidence="1">Membrane</location>
        <topology evidence="1">Single-pass type I membrane protein</topology>
    </subcellularLocation>
</comment>
<comment type="domain">
    <text>The integrin I-domain (insert) is a VWFA domain. Integrins with I-domains do not undergo protease cleavage.</text>
</comment>
<comment type="similarity">
    <text evidence="7">Belongs to the integrin alpha chain family.</text>
</comment>
<protein>
    <recommendedName>
        <fullName>Integrin alpha-11</fullName>
    </recommendedName>
</protein>
<name>ITA11_MOUSE</name>